<accession>Q3BSI7</accession>
<comment type="function">
    <text evidence="1">Catalyzes the NADPH-dependent reduction of N-acetyl-5-glutamyl phosphate to yield N-acetyl-L-glutamate 5-semialdehyde.</text>
</comment>
<comment type="catalytic activity">
    <reaction evidence="1">
        <text>N-acetyl-L-glutamate 5-semialdehyde + phosphate + NADP(+) = N-acetyl-L-glutamyl 5-phosphate + NADPH + H(+)</text>
        <dbReference type="Rhea" id="RHEA:21588"/>
        <dbReference type="ChEBI" id="CHEBI:15378"/>
        <dbReference type="ChEBI" id="CHEBI:29123"/>
        <dbReference type="ChEBI" id="CHEBI:43474"/>
        <dbReference type="ChEBI" id="CHEBI:57783"/>
        <dbReference type="ChEBI" id="CHEBI:57936"/>
        <dbReference type="ChEBI" id="CHEBI:58349"/>
        <dbReference type="EC" id="1.2.1.38"/>
    </reaction>
</comment>
<comment type="pathway">
    <text evidence="1">Amino-acid biosynthesis; L-arginine biosynthesis; N(2)-acetyl-L-ornithine from L-glutamate: step 3/4.</text>
</comment>
<comment type="subcellular location">
    <subcellularLocation>
        <location evidence="1">Cytoplasm</location>
    </subcellularLocation>
</comment>
<comment type="similarity">
    <text evidence="1">Belongs to the NAGSA dehydrogenase family. Type 1 subfamily.</text>
</comment>
<organism>
    <name type="scientific">Xanthomonas euvesicatoria pv. vesicatoria (strain 85-10)</name>
    <name type="common">Xanthomonas campestris pv. vesicatoria</name>
    <dbReference type="NCBI Taxonomy" id="316273"/>
    <lineage>
        <taxon>Bacteria</taxon>
        <taxon>Pseudomonadati</taxon>
        <taxon>Pseudomonadota</taxon>
        <taxon>Gammaproteobacteria</taxon>
        <taxon>Lysobacterales</taxon>
        <taxon>Lysobacteraceae</taxon>
        <taxon>Xanthomonas</taxon>
    </lineage>
</organism>
<name>ARGC_XANE5</name>
<dbReference type="EC" id="1.2.1.38" evidence="1"/>
<dbReference type="EMBL" id="AM039952">
    <property type="protein sequence ID" value="CAJ24222.1"/>
    <property type="molecule type" value="Genomic_DNA"/>
</dbReference>
<dbReference type="RefSeq" id="WP_008573394.1">
    <property type="nucleotide sequence ID" value="NZ_CP017190.1"/>
</dbReference>
<dbReference type="SMR" id="Q3BSI7"/>
<dbReference type="STRING" id="456327.BJD11_10175"/>
<dbReference type="GeneID" id="61779215"/>
<dbReference type="KEGG" id="xcv:XCV2545"/>
<dbReference type="eggNOG" id="COG0002">
    <property type="taxonomic scope" value="Bacteria"/>
</dbReference>
<dbReference type="HOGENOM" id="CLU_006384_3_0_6"/>
<dbReference type="UniPathway" id="UPA00068">
    <property type="reaction ID" value="UER00108"/>
</dbReference>
<dbReference type="Proteomes" id="UP000007069">
    <property type="component" value="Chromosome"/>
</dbReference>
<dbReference type="GO" id="GO:0005737">
    <property type="term" value="C:cytoplasm"/>
    <property type="evidence" value="ECO:0007669"/>
    <property type="project" value="UniProtKB-SubCell"/>
</dbReference>
<dbReference type="GO" id="GO:0003942">
    <property type="term" value="F:N-acetyl-gamma-glutamyl-phosphate reductase activity"/>
    <property type="evidence" value="ECO:0007669"/>
    <property type="project" value="UniProtKB-UniRule"/>
</dbReference>
<dbReference type="GO" id="GO:0051287">
    <property type="term" value="F:NAD binding"/>
    <property type="evidence" value="ECO:0007669"/>
    <property type="project" value="InterPro"/>
</dbReference>
<dbReference type="GO" id="GO:0070401">
    <property type="term" value="F:NADP+ binding"/>
    <property type="evidence" value="ECO:0007669"/>
    <property type="project" value="InterPro"/>
</dbReference>
<dbReference type="GO" id="GO:0006526">
    <property type="term" value="P:L-arginine biosynthetic process"/>
    <property type="evidence" value="ECO:0007669"/>
    <property type="project" value="UniProtKB-UniRule"/>
</dbReference>
<dbReference type="CDD" id="cd23936">
    <property type="entry name" value="AGPR_C_ARG5_6_like"/>
    <property type="match status" value="1"/>
</dbReference>
<dbReference type="CDD" id="cd24149">
    <property type="entry name" value="AGPR_N_ARG5_6_like"/>
    <property type="match status" value="1"/>
</dbReference>
<dbReference type="Gene3D" id="3.30.360.10">
    <property type="entry name" value="Dihydrodipicolinate Reductase, domain 2"/>
    <property type="match status" value="1"/>
</dbReference>
<dbReference type="Gene3D" id="3.40.50.720">
    <property type="entry name" value="NAD(P)-binding Rossmann-like Domain"/>
    <property type="match status" value="1"/>
</dbReference>
<dbReference type="HAMAP" id="MF_00150">
    <property type="entry name" value="ArgC_type1"/>
    <property type="match status" value="1"/>
</dbReference>
<dbReference type="InterPro" id="IPR023013">
    <property type="entry name" value="AGPR_AS"/>
</dbReference>
<dbReference type="InterPro" id="IPR000706">
    <property type="entry name" value="AGPR_type-1"/>
</dbReference>
<dbReference type="InterPro" id="IPR036291">
    <property type="entry name" value="NAD(P)-bd_dom_sf"/>
</dbReference>
<dbReference type="InterPro" id="IPR050085">
    <property type="entry name" value="NAGSA_dehydrogenase"/>
</dbReference>
<dbReference type="InterPro" id="IPR000534">
    <property type="entry name" value="Semialdehyde_DH_NAD-bd"/>
</dbReference>
<dbReference type="NCBIfam" id="TIGR01850">
    <property type="entry name" value="argC"/>
    <property type="match status" value="1"/>
</dbReference>
<dbReference type="PANTHER" id="PTHR32338:SF10">
    <property type="entry name" value="N-ACETYL-GAMMA-GLUTAMYL-PHOSPHATE REDUCTASE, CHLOROPLASTIC-RELATED"/>
    <property type="match status" value="1"/>
</dbReference>
<dbReference type="PANTHER" id="PTHR32338">
    <property type="entry name" value="N-ACETYL-GAMMA-GLUTAMYL-PHOSPHATE REDUCTASE, CHLOROPLASTIC-RELATED-RELATED"/>
    <property type="match status" value="1"/>
</dbReference>
<dbReference type="Pfam" id="PF01118">
    <property type="entry name" value="Semialdhyde_dh"/>
    <property type="match status" value="1"/>
</dbReference>
<dbReference type="Pfam" id="PF22698">
    <property type="entry name" value="Semialdhyde_dhC_1"/>
    <property type="match status" value="1"/>
</dbReference>
<dbReference type="SMART" id="SM00859">
    <property type="entry name" value="Semialdhyde_dh"/>
    <property type="match status" value="1"/>
</dbReference>
<dbReference type="SUPFAM" id="SSF55347">
    <property type="entry name" value="Glyceraldehyde-3-phosphate dehydrogenase-like, C-terminal domain"/>
    <property type="match status" value="1"/>
</dbReference>
<dbReference type="SUPFAM" id="SSF51735">
    <property type="entry name" value="NAD(P)-binding Rossmann-fold domains"/>
    <property type="match status" value="1"/>
</dbReference>
<dbReference type="PROSITE" id="PS01224">
    <property type="entry name" value="ARGC"/>
    <property type="match status" value="1"/>
</dbReference>
<sequence length="316" mass="34081">MTVEQKTIGIVGARGHTGSELIKLVAAHPQLHLSFVSSRELAGQRVAEHNDAYQGQLRYENLDAAAVAAKAADVVILALPNGMAEPFVAAIDAAAPQTLVIDLSADYRFDPAWYYGLPELTRGSYAGQKRISNPGCYATAMQLTIAPLLDQLAGPPQCFGVSGYSGAGTTPSDKNNPALLSNNVMPYALTNHMHEREVSAQLGVPVEFMPHVAPHFRGITMTVNLWLQQPLTREQIQARYTQRYADEPLIEIVDEAPWVSRIAGKHGVQIGGVTLAPGNKRVVVVATLDNLLKGAATQAMQNLNLALGWDELMAIR</sequence>
<feature type="chain" id="PRO_1000096747" description="N-acetyl-gamma-glutamyl-phosphate reductase">
    <location>
        <begin position="1"/>
        <end position="316"/>
    </location>
</feature>
<feature type="active site" evidence="1">
    <location>
        <position position="136"/>
    </location>
</feature>
<protein>
    <recommendedName>
        <fullName evidence="1">N-acetyl-gamma-glutamyl-phosphate reductase</fullName>
        <shortName evidence="1">AGPR</shortName>
        <ecNumber evidence="1">1.2.1.38</ecNumber>
    </recommendedName>
    <alternativeName>
        <fullName evidence="1">N-acetyl-glutamate semialdehyde dehydrogenase</fullName>
        <shortName evidence="1">NAGSA dehydrogenase</shortName>
    </alternativeName>
</protein>
<proteinExistence type="inferred from homology"/>
<reference key="1">
    <citation type="journal article" date="2005" name="J. Bacteriol.">
        <title>Insights into genome plasticity and pathogenicity of the plant pathogenic Bacterium Xanthomonas campestris pv. vesicatoria revealed by the complete genome sequence.</title>
        <authorList>
            <person name="Thieme F."/>
            <person name="Koebnik R."/>
            <person name="Bekel T."/>
            <person name="Berger C."/>
            <person name="Boch J."/>
            <person name="Buettner D."/>
            <person name="Caldana C."/>
            <person name="Gaigalat L."/>
            <person name="Goesmann A."/>
            <person name="Kay S."/>
            <person name="Kirchner O."/>
            <person name="Lanz C."/>
            <person name="Linke B."/>
            <person name="McHardy A.C."/>
            <person name="Meyer F."/>
            <person name="Mittenhuber G."/>
            <person name="Nies D.H."/>
            <person name="Niesbach-Kloesgen U."/>
            <person name="Patschkowski T."/>
            <person name="Rueckert C."/>
            <person name="Rupp O."/>
            <person name="Schneiker S."/>
            <person name="Schuster S.C."/>
            <person name="Vorhoelter F.J."/>
            <person name="Weber E."/>
            <person name="Puehler A."/>
            <person name="Bonas U."/>
            <person name="Bartels D."/>
            <person name="Kaiser O."/>
        </authorList>
    </citation>
    <scope>NUCLEOTIDE SEQUENCE [LARGE SCALE GENOMIC DNA]</scope>
    <source>
        <strain>85-10</strain>
    </source>
</reference>
<evidence type="ECO:0000255" key="1">
    <source>
        <dbReference type="HAMAP-Rule" id="MF_00150"/>
    </source>
</evidence>
<gene>
    <name evidence="1" type="primary">argC</name>
    <name type="ordered locus">XCV2545</name>
</gene>
<keyword id="KW-0028">Amino-acid biosynthesis</keyword>
<keyword id="KW-0055">Arginine biosynthesis</keyword>
<keyword id="KW-0963">Cytoplasm</keyword>
<keyword id="KW-0521">NADP</keyword>
<keyword id="KW-0560">Oxidoreductase</keyword>